<comment type="function">
    <text>Component of the sarcoglycan complex, a subcomplex of the dystrophin-glycoprotein complex which forms a link between the F-actin cytoskeleton and the extracellular matrix.</text>
</comment>
<comment type="subunit">
    <text evidence="2 4">Cross-link to form 2 major subcomplexes: one consisting of SGCB, SGCD and SGCG and the other consisting of SGCB and SGCD. The association between SGCB and SGCG is particularly strong while SGCA is loosely associated with the other sarcoglycans. Interacts with the syntrophin SNTA1.</text>
</comment>
<comment type="subcellular location">
    <subcellularLocation>
        <location evidence="4">Cell membrane</location>
        <location evidence="4">Sarcolemma</location>
        <topology evidence="4">Single-pass type I membrane protein</topology>
    </subcellularLocation>
    <subcellularLocation>
        <location evidence="4">Cytoplasm</location>
        <location evidence="4">Cytoskeleton</location>
    </subcellularLocation>
</comment>
<comment type="tissue specificity">
    <text evidence="3">Striated muscle, both skeletal and cardiac.</text>
</comment>
<comment type="developmental stage">
    <text evidence="3">In the embryo, expression begins at day 14 and coincides with the onset of primary myogenesis.</text>
</comment>
<comment type="similarity">
    <text evidence="5">Belongs to the sarcoglycan alpha/epsilon family.</text>
</comment>
<accession>P82350</accession>
<accession>O35311</accession>
<accession>O88490</accession>
<proteinExistence type="evidence at protein level"/>
<protein>
    <recommendedName>
        <fullName>Alpha-sarcoglycan</fullName>
        <shortName>Alpha-SG</shortName>
    </recommendedName>
    <alternativeName>
        <fullName>50 kDa dystrophin-associated glycoprotein</fullName>
        <shortName>50DAG</shortName>
    </alternativeName>
    <alternativeName>
        <fullName>Adhalin</fullName>
    </alternativeName>
</protein>
<keyword id="KW-0002">3D-structure</keyword>
<keyword id="KW-1003">Cell membrane</keyword>
<keyword id="KW-0963">Cytoplasm</keyword>
<keyword id="KW-0206">Cytoskeleton</keyword>
<keyword id="KW-0325">Glycoprotein</keyword>
<keyword id="KW-0472">Membrane</keyword>
<keyword id="KW-0597">Phosphoprotein</keyword>
<keyword id="KW-1185">Reference proteome</keyword>
<keyword id="KW-0732">Signal</keyword>
<keyword id="KW-0812">Transmembrane</keyword>
<keyword id="KW-1133">Transmembrane helix</keyword>
<organism>
    <name type="scientific">Mus musculus</name>
    <name type="common">Mouse</name>
    <dbReference type="NCBI Taxonomy" id="10090"/>
    <lineage>
        <taxon>Eukaryota</taxon>
        <taxon>Metazoa</taxon>
        <taxon>Chordata</taxon>
        <taxon>Craniata</taxon>
        <taxon>Vertebrata</taxon>
        <taxon>Euteleostomi</taxon>
        <taxon>Mammalia</taxon>
        <taxon>Eutheria</taxon>
        <taxon>Euarchontoglires</taxon>
        <taxon>Glires</taxon>
        <taxon>Rodentia</taxon>
        <taxon>Myomorpha</taxon>
        <taxon>Muroidea</taxon>
        <taxon>Muridae</taxon>
        <taxon>Murinae</taxon>
        <taxon>Mus</taxon>
        <taxon>Mus</taxon>
    </lineage>
</organism>
<name>SGCA_MOUSE</name>
<feature type="signal peptide" evidence="1">
    <location>
        <begin position="1"/>
        <end position="23"/>
    </location>
</feature>
<feature type="chain" id="PRO_0000031675" description="Alpha-sarcoglycan">
    <location>
        <begin position="24"/>
        <end position="387"/>
    </location>
</feature>
<feature type="topological domain" description="Extracellular" evidence="1">
    <location>
        <begin position="24"/>
        <end position="293"/>
    </location>
</feature>
<feature type="transmembrane region" description="Helical" evidence="1">
    <location>
        <begin position="294"/>
        <end position="314"/>
    </location>
</feature>
<feature type="topological domain" description="Cytoplasmic" evidence="1">
    <location>
        <begin position="315"/>
        <end position="387"/>
    </location>
</feature>
<feature type="modified residue" description="Phosphoserine" evidence="6">
    <location>
        <position position="377"/>
    </location>
</feature>
<feature type="glycosylation site" description="N-linked (GlcNAc...) asparagine" evidence="1">
    <location>
        <position position="174"/>
    </location>
</feature>
<feature type="glycosylation site" description="N-linked (GlcNAc...) asparagine" evidence="1">
    <location>
        <position position="246"/>
    </location>
</feature>
<feature type="sequence conflict" description="In Ref. 1; AAB70754." evidence="5" ref="1">
    <original>R</original>
    <variation>K</variation>
    <location>
        <position position="19"/>
    </location>
</feature>
<feature type="sequence conflict" description="In Ref. 1; AAB70754." evidence="5" ref="1">
    <original>L</original>
    <variation>V</variation>
    <location>
        <position position="76"/>
    </location>
</feature>
<feature type="sequence conflict" description="In Ref. 1; AAB70754." evidence="5" ref="1">
    <original>LP</original>
    <variation>VS</variation>
    <location>
        <begin position="149"/>
        <end position="150"/>
    </location>
</feature>
<gene>
    <name type="primary">Sgca</name>
</gene>
<evidence type="ECO:0000255" key="1"/>
<evidence type="ECO:0000269" key="2">
    <source>
    </source>
</evidence>
<evidence type="ECO:0000269" key="3">
    <source>
    </source>
</evidence>
<evidence type="ECO:0000269" key="4">
    <source>
    </source>
</evidence>
<evidence type="ECO:0000305" key="5"/>
<evidence type="ECO:0007744" key="6">
    <source>
    </source>
</evidence>
<reference key="1">
    <citation type="journal article" date="1997" name="Biochem. Biophys. Res. Commun.">
        <title>Mouse adhalin: primary structure and expression during late stages of muscle differentiation in vitro.</title>
        <authorList>
            <person name="Liu L."/>
            <person name="Vachon P.H."/>
            <person name="Kuang W."/>
            <person name="Xu H."/>
            <person name="Wewer U.M."/>
            <person name="Kylsten P."/>
            <person name="Engvall E."/>
        </authorList>
    </citation>
    <scope>NUCLEOTIDE SEQUENCE [MRNA]</scope>
    <scope>TISSUE SPECIFICITY</scope>
    <scope>DEVELOPMENTAL STAGE</scope>
    <source>
        <strain>FVB/N</strain>
        <tissue>Myoblast</tissue>
    </source>
</reference>
<reference key="2">
    <citation type="journal article" date="1999" name="Biochem. Biophys. Res. Commun.">
        <title>Developmental expression of sarcoglycan gene products in cultured myocytes.</title>
        <authorList>
            <person name="Noguchi S."/>
            <person name="Wakabayashi E."/>
            <person name="Imamura M."/>
            <person name="Yoshida M."/>
            <person name="Ozawa E."/>
        </authorList>
    </citation>
    <scope>NUCLEOTIDE SEQUENCE [MRNA]</scope>
    <source>
        <tissue>Skeletal muscle</tissue>
    </source>
</reference>
<reference key="3">
    <citation type="submission" date="1998-05" db="EMBL/GenBank/DDBJ databases">
        <title>Alpha-sarcoglycan-deficient mice as an animal model for autosomal recessive limb-girdle muscular dystrophy.</title>
        <authorList>
            <person name="Duclos F."/>
            <person name="Straub V."/>
            <person name="Moore S."/>
            <person name="Hrstka R."/>
            <person name="Crosbie R.H."/>
            <person name="Durbeej M."/>
            <person name="Lebakken C.S."/>
            <person name="Holt K.H."/>
            <person name="Lim L.E."/>
            <person name="Ettinger A."/>
            <person name="Sanes J.R."/>
            <person name="Davidson B.L."/>
            <person name="Williamson R."/>
            <person name="Campbell K.P."/>
        </authorList>
    </citation>
    <scope>NUCLEOTIDE SEQUENCE</scope>
    <source>
        <strain>129/Sv</strain>
    </source>
</reference>
<reference key="4">
    <citation type="journal article" date="2005" name="Science">
        <title>The transcriptional landscape of the mammalian genome.</title>
        <authorList>
            <person name="Carninci P."/>
            <person name="Kasukawa T."/>
            <person name="Katayama S."/>
            <person name="Gough J."/>
            <person name="Frith M.C."/>
            <person name="Maeda N."/>
            <person name="Oyama R."/>
            <person name="Ravasi T."/>
            <person name="Lenhard B."/>
            <person name="Wells C."/>
            <person name="Kodzius R."/>
            <person name="Shimokawa K."/>
            <person name="Bajic V.B."/>
            <person name="Brenner S.E."/>
            <person name="Batalov S."/>
            <person name="Forrest A.R."/>
            <person name="Zavolan M."/>
            <person name="Davis M.J."/>
            <person name="Wilming L.G."/>
            <person name="Aidinis V."/>
            <person name="Allen J.E."/>
            <person name="Ambesi-Impiombato A."/>
            <person name="Apweiler R."/>
            <person name="Aturaliya R.N."/>
            <person name="Bailey T.L."/>
            <person name="Bansal M."/>
            <person name="Baxter L."/>
            <person name="Beisel K.W."/>
            <person name="Bersano T."/>
            <person name="Bono H."/>
            <person name="Chalk A.M."/>
            <person name="Chiu K.P."/>
            <person name="Choudhary V."/>
            <person name="Christoffels A."/>
            <person name="Clutterbuck D.R."/>
            <person name="Crowe M.L."/>
            <person name="Dalla E."/>
            <person name="Dalrymple B.P."/>
            <person name="de Bono B."/>
            <person name="Della Gatta G."/>
            <person name="di Bernardo D."/>
            <person name="Down T."/>
            <person name="Engstrom P."/>
            <person name="Fagiolini M."/>
            <person name="Faulkner G."/>
            <person name="Fletcher C.F."/>
            <person name="Fukushima T."/>
            <person name="Furuno M."/>
            <person name="Futaki S."/>
            <person name="Gariboldi M."/>
            <person name="Georgii-Hemming P."/>
            <person name="Gingeras T.R."/>
            <person name="Gojobori T."/>
            <person name="Green R.E."/>
            <person name="Gustincich S."/>
            <person name="Harbers M."/>
            <person name="Hayashi Y."/>
            <person name="Hensch T.K."/>
            <person name="Hirokawa N."/>
            <person name="Hill D."/>
            <person name="Huminiecki L."/>
            <person name="Iacono M."/>
            <person name="Ikeo K."/>
            <person name="Iwama A."/>
            <person name="Ishikawa T."/>
            <person name="Jakt M."/>
            <person name="Kanapin A."/>
            <person name="Katoh M."/>
            <person name="Kawasawa Y."/>
            <person name="Kelso J."/>
            <person name="Kitamura H."/>
            <person name="Kitano H."/>
            <person name="Kollias G."/>
            <person name="Krishnan S.P."/>
            <person name="Kruger A."/>
            <person name="Kummerfeld S.K."/>
            <person name="Kurochkin I.V."/>
            <person name="Lareau L.F."/>
            <person name="Lazarevic D."/>
            <person name="Lipovich L."/>
            <person name="Liu J."/>
            <person name="Liuni S."/>
            <person name="McWilliam S."/>
            <person name="Madan Babu M."/>
            <person name="Madera M."/>
            <person name="Marchionni L."/>
            <person name="Matsuda H."/>
            <person name="Matsuzawa S."/>
            <person name="Miki H."/>
            <person name="Mignone F."/>
            <person name="Miyake S."/>
            <person name="Morris K."/>
            <person name="Mottagui-Tabar S."/>
            <person name="Mulder N."/>
            <person name="Nakano N."/>
            <person name="Nakauchi H."/>
            <person name="Ng P."/>
            <person name="Nilsson R."/>
            <person name="Nishiguchi S."/>
            <person name="Nishikawa S."/>
            <person name="Nori F."/>
            <person name="Ohara O."/>
            <person name="Okazaki Y."/>
            <person name="Orlando V."/>
            <person name="Pang K.C."/>
            <person name="Pavan W.J."/>
            <person name="Pavesi G."/>
            <person name="Pesole G."/>
            <person name="Petrovsky N."/>
            <person name="Piazza S."/>
            <person name="Reed J."/>
            <person name="Reid J.F."/>
            <person name="Ring B.Z."/>
            <person name="Ringwald M."/>
            <person name="Rost B."/>
            <person name="Ruan Y."/>
            <person name="Salzberg S.L."/>
            <person name="Sandelin A."/>
            <person name="Schneider C."/>
            <person name="Schoenbach C."/>
            <person name="Sekiguchi K."/>
            <person name="Semple C.A."/>
            <person name="Seno S."/>
            <person name="Sessa L."/>
            <person name="Sheng Y."/>
            <person name="Shibata Y."/>
            <person name="Shimada H."/>
            <person name="Shimada K."/>
            <person name="Silva D."/>
            <person name="Sinclair B."/>
            <person name="Sperling S."/>
            <person name="Stupka E."/>
            <person name="Sugiura K."/>
            <person name="Sultana R."/>
            <person name="Takenaka Y."/>
            <person name="Taki K."/>
            <person name="Tammoja K."/>
            <person name="Tan S.L."/>
            <person name="Tang S."/>
            <person name="Taylor M.S."/>
            <person name="Tegner J."/>
            <person name="Teichmann S.A."/>
            <person name="Ueda H.R."/>
            <person name="van Nimwegen E."/>
            <person name="Verardo R."/>
            <person name="Wei C.L."/>
            <person name="Yagi K."/>
            <person name="Yamanishi H."/>
            <person name="Zabarovsky E."/>
            <person name="Zhu S."/>
            <person name="Zimmer A."/>
            <person name="Hide W."/>
            <person name="Bult C."/>
            <person name="Grimmond S.M."/>
            <person name="Teasdale R.D."/>
            <person name="Liu E.T."/>
            <person name="Brusic V."/>
            <person name="Quackenbush J."/>
            <person name="Wahlestedt C."/>
            <person name="Mattick J.S."/>
            <person name="Hume D.A."/>
            <person name="Kai C."/>
            <person name="Sasaki D."/>
            <person name="Tomaru Y."/>
            <person name="Fukuda S."/>
            <person name="Kanamori-Katayama M."/>
            <person name="Suzuki M."/>
            <person name="Aoki J."/>
            <person name="Arakawa T."/>
            <person name="Iida J."/>
            <person name="Imamura K."/>
            <person name="Itoh M."/>
            <person name="Kato T."/>
            <person name="Kawaji H."/>
            <person name="Kawagashira N."/>
            <person name="Kawashima T."/>
            <person name="Kojima M."/>
            <person name="Kondo S."/>
            <person name="Konno H."/>
            <person name="Nakano K."/>
            <person name="Ninomiya N."/>
            <person name="Nishio T."/>
            <person name="Okada M."/>
            <person name="Plessy C."/>
            <person name="Shibata K."/>
            <person name="Shiraki T."/>
            <person name="Suzuki S."/>
            <person name="Tagami M."/>
            <person name="Waki K."/>
            <person name="Watahiki A."/>
            <person name="Okamura-Oho Y."/>
            <person name="Suzuki H."/>
            <person name="Kawai J."/>
            <person name="Hayashizaki Y."/>
        </authorList>
    </citation>
    <scope>NUCLEOTIDE SEQUENCE [LARGE SCALE MRNA]</scope>
    <source>
        <strain>C57BL/6J</strain>
        <tissue>Tongue</tissue>
    </source>
</reference>
<reference key="5">
    <citation type="journal article" date="1995" name="Biochemistry">
        <title>Interactions between dystrophin glycoprotein complex proteins.</title>
        <authorList>
            <person name="Madhavan R."/>
            <person name="Jarrett H.W."/>
        </authorList>
    </citation>
    <scope>INTERACTION WITH SNTA1</scope>
</reference>
<reference key="6">
    <citation type="journal article" date="1998" name="J. Cell Biol.">
        <title>Molecular organization of sarcoglycan complex in mouse myotubes in culture.</title>
        <authorList>
            <person name="Chan Y.-M."/>
            <person name="Boennemann C.G."/>
            <person name="Lidov H.G.W."/>
            <person name="Kunkel L.M."/>
        </authorList>
    </citation>
    <scope>SUBCELLULAR LOCATION</scope>
    <scope>SUBUNIT</scope>
</reference>
<reference key="7">
    <citation type="journal article" date="2010" name="Cell">
        <title>A tissue-specific atlas of mouse protein phosphorylation and expression.</title>
        <authorList>
            <person name="Huttlin E.L."/>
            <person name="Jedrychowski M.P."/>
            <person name="Elias J.E."/>
            <person name="Goswami T."/>
            <person name="Rad R."/>
            <person name="Beausoleil S.A."/>
            <person name="Villen J."/>
            <person name="Haas W."/>
            <person name="Sowa M.E."/>
            <person name="Gygi S.P."/>
        </authorList>
    </citation>
    <scope>PHOSPHORYLATION [LARGE SCALE ANALYSIS] AT SER-377</scope>
    <scope>IDENTIFICATION BY MASS SPECTROMETRY [LARGE SCALE ANALYSIS]</scope>
    <source>
        <tissue>Heart</tissue>
    </source>
</reference>
<sequence length="387" mass="43287">MAAAVTWIPLLAGLLAGLRDTKAQQTTLHLLVGRVFVHPLEHATFLRLPEHVAVPPTVRLTYHAHLQGHPDLPRWLHYTQRSPYNPGFLYGSPTPEDRGYQVIEVTAYNRDSFDTTRQRLLLLIGDPEGPRLPYQAEFLVRSHDVEEVLPTTPANRFLTALGGLWEPGELQLLNITSALDRGGRVPLPIEGRKEGVYIKVGSATPFSTCLKMVASPDSYARCAQGQPPLLSCYDTLAPHFRVDWCNVSLVDKSVPEPLDEVPTPGDGILEHDPFFCPPTEATDRDFLTDALVTLLVPLLVALLLTLLLAYIMCFRREGRLKRDMATSDIQMFHHCSIHGNTEELRQMAASREVPRPLSTLPMFNVRTGERLPPRVDSAQMPLILDQH</sequence>
<dbReference type="EMBL" id="AF019564">
    <property type="protein sequence ID" value="AAB70754.1"/>
    <property type="molecule type" value="mRNA"/>
</dbReference>
<dbReference type="EMBL" id="AB024920">
    <property type="protein sequence ID" value="BAA83491.1"/>
    <property type="molecule type" value="mRNA"/>
</dbReference>
<dbReference type="EMBL" id="AF064081">
    <property type="protein sequence ID" value="AAC33447.1"/>
    <property type="molecule type" value="Genomic_DNA"/>
</dbReference>
<dbReference type="EMBL" id="AK075915">
    <property type="protein sequence ID" value="BAC36051.1"/>
    <property type="molecule type" value="mRNA"/>
</dbReference>
<dbReference type="CCDS" id="CCDS25266.1"/>
<dbReference type="PIR" id="JC5556">
    <property type="entry name" value="JC5556"/>
</dbReference>
<dbReference type="RefSeq" id="NP_033187.1">
    <property type="nucleotide sequence ID" value="NM_009161.4"/>
</dbReference>
<dbReference type="RefSeq" id="XP_011247138.1">
    <property type="nucleotide sequence ID" value="XM_011248836.4"/>
</dbReference>
<dbReference type="PDB" id="8YT8">
    <property type="method" value="EM"/>
    <property type="resolution" value="3.50 A"/>
    <property type="chains" value="A=24-314"/>
</dbReference>
<dbReference type="PDBsum" id="8YT8"/>
<dbReference type="EMDB" id="EMD-39568"/>
<dbReference type="SMR" id="P82350"/>
<dbReference type="BioGRID" id="203195">
    <property type="interactions" value="9"/>
</dbReference>
<dbReference type="CORUM" id="P82350"/>
<dbReference type="FunCoup" id="P82350">
    <property type="interactions" value="48"/>
</dbReference>
<dbReference type="IntAct" id="P82350">
    <property type="interactions" value="2"/>
</dbReference>
<dbReference type="STRING" id="10090.ENSMUSP00000099451"/>
<dbReference type="GlyCosmos" id="P82350">
    <property type="glycosylation" value="2 sites, No reported glycans"/>
</dbReference>
<dbReference type="GlyGen" id="P82350">
    <property type="glycosylation" value="5 sites, 1 O-linked glycan (1 site)"/>
</dbReference>
<dbReference type="iPTMnet" id="P82350"/>
<dbReference type="PhosphoSitePlus" id="P82350"/>
<dbReference type="jPOST" id="P82350"/>
<dbReference type="PaxDb" id="10090-ENSMUSP00000099451"/>
<dbReference type="PeptideAtlas" id="P82350"/>
<dbReference type="ProteomicsDB" id="261203"/>
<dbReference type="Antibodypedia" id="2323">
    <property type="antibodies" value="215 antibodies from 32 providers"/>
</dbReference>
<dbReference type="DNASU" id="20391"/>
<dbReference type="Ensembl" id="ENSMUST00000100551.11">
    <property type="protein sequence ID" value="ENSMUSP00000098118.5"/>
    <property type="gene ID" value="ENSMUSG00000001508.16"/>
</dbReference>
<dbReference type="Ensembl" id="ENSMUST00000103162.8">
    <property type="protein sequence ID" value="ENSMUSP00000099451.2"/>
    <property type="gene ID" value="ENSMUSG00000001508.16"/>
</dbReference>
<dbReference type="Ensembl" id="ENSMUST00000166320.8">
    <property type="protein sequence ID" value="ENSMUSP00000130617.2"/>
    <property type="gene ID" value="ENSMUSG00000001508.16"/>
</dbReference>
<dbReference type="GeneID" id="20391"/>
<dbReference type="KEGG" id="mmu:20391"/>
<dbReference type="UCSC" id="uc007kzo.3">
    <property type="organism name" value="mouse"/>
</dbReference>
<dbReference type="AGR" id="MGI:894698"/>
<dbReference type="CTD" id="6442"/>
<dbReference type="MGI" id="MGI:894698">
    <property type="gene designation" value="Sgca"/>
</dbReference>
<dbReference type="VEuPathDB" id="HostDB:ENSMUSG00000001508"/>
<dbReference type="eggNOG" id="KOG4482">
    <property type="taxonomic scope" value="Eukaryota"/>
</dbReference>
<dbReference type="GeneTree" id="ENSGT00390000005672"/>
<dbReference type="HOGENOM" id="CLU_053258_0_1_1"/>
<dbReference type="InParanoid" id="P82350"/>
<dbReference type="OMA" id="VGSEQYF"/>
<dbReference type="OrthoDB" id="10019906at2759"/>
<dbReference type="PhylomeDB" id="P82350"/>
<dbReference type="TreeFam" id="TF314655"/>
<dbReference type="Reactome" id="R-MMU-9913351">
    <property type="pathway name" value="Formation of the dystrophin-glycoprotein complex (DGC)"/>
</dbReference>
<dbReference type="BioGRID-ORCS" id="20391">
    <property type="hits" value="3 hits in 77 CRISPR screens"/>
</dbReference>
<dbReference type="PRO" id="PR:P82350"/>
<dbReference type="Proteomes" id="UP000000589">
    <property type="component" value="Chromosome 11"/>
</dbReference>
<dbReference type="RNAct" id="P82350">
    <property type="molecule type" value="protein"/>
</dbReference>
<dbReference type="Bgee" id="ENSMUSG00000001508">
    <property type="expression patterns" value="Expressed in hindlimb stylopod muscle and 94 other cell types or tissues"/>
</dbReference>
<dbReference type="ExpressionAtlas" id="P82350">
    <property type="expression patterns" value="baseline and differential"/>
</dbReference>
<dbReference type="GO" id="GO:0005911">
    <property type="term" value="C:cell-cell junction"/>
    <property type="evidence" value="ECO:0000314"/>
    <property type="project" value="MGI"/>
</dbReference>
<dbReference type="GO" id="GO:0005737">
    <property type="term" value="C:cytoplasm"/>
    <property type="evidence" value="ECO:0007669"/>
    <property type="project" value="UniProtKB-KW"/>
</dbReference>
<dbReference type="GO" id="GO:0005856">
    <property type="term" value="C:cytoskeleton"/>
    <property type="evidence" value="ECO:0007669"/>
    <property type="project" value="UniProtKB-SubCell"/>
</dbReference>
<dbReference type="GO" id="GO:0016011">
    <property type="term" value="C:dystroglycan complex"/>
    <property type="evidence" value="ECO:0000314"/>
    <property type="project" value="MGI"/>
</dbReference>
<dbReference type="GO" id="GO:0045121">
    <property type="term" value="C:membrane raft"/>
    <property type="evidence" value="ECO:0000314"/>
    <property type="project" value="MGI"/>
</dbReference>
<dbReference type="GO" id="GO:0005886">
    <property type="term" value="C:plasma membrane"/>
    <property type="evidence" value="ECO:0000314"/>
    <property type="project" value="MGI"/>
</dbReference>
<dbReference type="GO" id="GO:0016012">
    <property type="term" value="C:sarcoglycan complex"/>
    <property type="evidence" value="ECO:0000314"/>
    <property type="project" value="MGI"/>
</dbReference>
<dbReference type="GO" id="GO:0042383">
    <property type="term" value="C:sarcolemma"/>
    <property type="evidence" value="ECO:0000314"/>
    <property type="project" value="MGI"/>
</dbReference>
<dbReference type="GO" id="GO:0005509">
    <property type="term" value="F:calcium ion binding"/>
    <property type="evidence" value="ECO:0007669"/>
    <property type="project" value="InterPro"/>
</dbReference>
<dbReference type="GO" id="GO:0061024">
    <property type="term" value="P:membrane organization"/>
    <property type="evidence" value="ECO:0000304"/>
    <property type="project" value="MGI"/>
</dbReference>
<dbReference type="InterPro" id="IPR006644">
    <property type="entry name" value="Cadg"/>
</dbReference>
<dbReference type="InterPro" id="IPR015919">
    <property type="entry name" value="Cadherin-like_sf"/>
</dbReference>
<dbReference type="InterPro" id="IPR008908">
    <property type="entry name" value="Sarcoglycan_alpha/epsilon"/>
</dbReference>
<dbReference type="InterPro" id="IPR048347">
    <property type="entry name" value="Sarcoglycan_C"/>
</dbReference>
<dbReference type="InterPro" id="IPR048346">
    <property type="entry name" value="Sarcoglycan_N"/>
</dbReference>
<dbReference type="PANTHER" id="PTHR10132">
    <property type="entry name" value="ALPHA-/EPSILON-SARCOGLYCAN FAMILY MEMBER"/>
    <property type="match status" value="1"/>
</dbReference>
<dbReference type="PANTHER" id="PTHR10132:SF16">
    <property type="entry name" value="ALPHA-SARCOGLYCAN"/>
    <property type="match status" value="1"/>
</dbReference>
<dbReference type="Pfam" id="PF05510">
    <property type="entry name" value="Sarcoglycan_2"/>
    <property type="match status" value="1"/>
</dbReference>
<dbReference type="Pfam" id="PF20989">
    <property type="entry name" value="Sarcoglycan_2_C"/>
    <property type="match status" value="1"/>
</dbReference>
<dbReference type="SMART" id="SM00736">
    <property type="entry name" value="CADG"/>
    <property type="match status" value="1"/>
</dbReference>
<dbReference type="SUPFAM" id="SSF49313">
    <property type="entry name" value="Cadherin-like"/>
    <property type="match status" value="1"/>
</dbReference>